<dbReference type="EC" id="2.1.1.104"/>
<dbReference type="EMBL" id="Y12228">
    <property type="protein sequence ID" value="CAA72911.1"/>
    <property type="molecule type" value="mRNA"/>
</dbReference>
<dbReference type="PIR" id="T10731">
    <property type="entry name" value="T10731"/>
</dbReference>
<dbReference type="SMR" id="O04854"/>
<dbReference type="UniPathway" id="UPA00711"/>
<dbReference type="GO" id="GO:0042409">
    <property type="term" value="F:caffeoyl-CoA O-methyltransferase activity"/>
    <property type="evidence" value="ECO:0007669"/>
    <property type="project" value="UniProtKB-EC"/>
</dbReference>
<dbReference type="GO" id="GO:0046872">
    <property type="term" value="F:metal ion binding"/>
    <property type="evidence" value="ECO:0007669"/>
    <property type="project" value="UniProtKB-KW"/>
</dbReference>
<dbReference type="GO" id="GO:0009809">
    <property type="term" value="P:lignin biosynthetic process"/>
    <property type="evidence" value="ECO:0007669"/>
    <property type="project" value="UniProtKB-KW"/>
</dbReference>
<dbReference type="GO" id="GO:0032259">
    <property type="term" value="P:methylation"/>
    <property type="evidence" value="ECO:0007669"/>
    <property type="project" value="UniProtKB-KW"/>
</dbReference>
<dbReference type="CDD" id="cd02440">
    <property type="entry name" value="AdoMet_MTases"/>
    <property type="match status" value="1"/>
</dbReference>
<dbReference type="FunFam" id="3.40.50.150:FF:000147">
    <property type="entry name" value="Caffeoyl-CoA O-methyltransferase 1"/>
    <property type="match status" value="1"/>
</dbReference>
<dbReference type="Gene3D" id="3.40.50.150">
    <property type="entry name" value="Vaccinia Virus protein VP39"/>
    <property type="match status" value="1"/>
</dbReference>
<dbReference type="InterPro" id="IPR050362">
    <property type="entry name" value="Cation-dep_OMT"/>
</dbReference>
<dbReference type="InterPro" id="IPR029063">
    <property type="entry name" value="SAM-dependent_MTases_sf"/>
</dbReference>
<dbReference type="InterPro" id="IPR002935">
    <property type="entry name" value="SAM_O-MeTrfase"/>
</dbReference>
<dbReference type="PANTHER" id="PTHR10509:SF74">
    <property type="entry name" value="CAFFEOYL-COA O-METHYLTRANSFERASE 2"/>
    <property type="match status" value="1"/>
</dbReference>
<dbReference type="PANTHER" id="PTHR10509">
    <property type="entry name" value="O-METHYLTRANSFERASE-RELATED"/>
    <property type="match status" value="1"/>
</dbReference>
<dbReference type="Pfam" id="PF01596">
    <property type="entry name" value="Methyltransf_3"/>
    <property type="match status" value="1"/>
</dbReference>
<dbReference type="SUPFAM" id="SSF53335">
    <property type="entry name" value="S-adenosyl-L-methionine-dependent methyltransferases"/>
    <property type="match status" value="1"/>
</dbReference>
<dbReference type="PROSITE" id="PS51682">
    <property type="entry name" value="SAM_OMT_I"/>
    <property type="match status" value="1"/>
</dbReference>
<feature type="chain" id="PRO_0000165683" description="Caffeoyl-CoA O-methyltransferase">
    <location>
        <begin position="1"/>
        <end position="249"/>
    </location>
</feature>
<feature type="binding site" evidence="2">
    <location>
        <position position="21"/>
    </location>
    <ligand>
        <name>substrate</name>
    </ligand>
</feature>
<feature type="binding site" evidence="3">
    <location>
        <position position="63"/>
    </location>
    <ligand>
        <name>S-adenosyl-L-methionine</name>
        <dbReference type="ChEBI" id="CHEBI:59789"/>
    </ligand>
</feature>
<feature type="binding site" evidence="3">
    <location>
        <position position="85"/>
    </location>
    <ligand>
        <name>S-adenosyl-L-methionine</name>
        <dbReference type="ChEBI" id="CHEBI:59789"/>
    </ligand>
</feature>
<feature type="binding site" evidence="3">
    <location>
        <begin position="87"/>
        <end position="88"/>
    </location>
    <ligand>
        <name>S-adenosyl-L-methionine</name>
        <dbReference type="ChEBI" id="CHEBI:59789"/>
    </ligand>
</feature>
<feature type="binding site" evidence="3">
    <location>
        <position position="93"/>
    </location>
    <ligand>
        <name>S-adenosyl-L-methionine</name>
        <dbReference type="ChEBI" id="CHEBI:59789"/>
    </ligand>
</feature>
<feature type="binding site" evidence="3">
    <location>
        <position position="111"/>
    </location>
    <ligand>
        <name>S-adenosyl-L-methionine</name>
        <dbReference type="ChEBI" id="CHEBI:59789"/>
    </ligand>
</feature>
<feature type="binding site" evidence="3">
    <location>
        <position position="140"/>
    </location>
    <ligand>
        <name>S-adenosyl-L-methionine</name>
        <dbReference type="ChEBI" id="CHEBI:59789"/>
    </ligand>
</feature>
<feature type="binding site" evidence="3">
    <location>
        <position position="162"/>
    </location>
    <ligand>
        <name>a divalent metal cation</name>
        <dbReference type="ChEBI" id="CHEBI:60240"/>
    </ligand>
</feature>
<feature type="binding site" evidence="2">
    <location>
        <position position="162"/>
    </location>
    <ligand>
        <name>substrate</name>
    </ligand>
</feature>
<feature type="binding site" evidence="3">
    <location>
        <position position="164"/>
    </location>
    <ligand>
        <name>S-adenosyl-L-methionine</name>
        <dbReference type="ChEBI" id="CHEBI:59789"/>
    </ligand>
</feature>
<feature type="binding site" evidence="3">
    <location>
        <position position="188"/>
    </location>
    <ligand>
        <name>a divalent metal cation</name>
        <dbReference type="ChEBI" id="CHEBI:60240"/>
    </ligand>
</feature>
<feature type="binding site" evidence="3">
    <location>
        <position position="189"/>
    </location>
    <ligand>
        <name>a divalent metal cation</name>
        <dbReference type="ChEBI" id="CHEBI:60240"/>
    </ligand>
</feature>
<feature type="binding site" evidence="2">
    <location>
        <position position="193"/>
    </location>
    <ligand>
        <name>substrate</name>
    </ligand>
</feature>
<name>CAMT_EUCGU</name>
<comment type="function">
    <text>Methylates caffeoyl-CoA to feruloyl-CoA and 5-hydroxyferuloyl-CoA to sinapoyl-CoA. Plays a role in the synthesis of feruloylated polysaccharides. Involved in the reinforcement of the plant cell wall. Also involved in the responding to wounding or pathogen challenge by the increased formation of cell wall-bound ferulic acid polymers.</text>
</comment>
<comment type="catalytic activity">
    <reaction>
        <text>(E)-caffeoyl-CoA + S-adenosyl-L-methionine = (E)-feruloyl-CoA + S-adenosyl-L-homocysteine + H(+)</text>
        <dbReference type="Rhea" id="RHEA:16925"/>
        <dbReference type="ChEBI" id="CHEBI:15378"/>
        <dbReference type="ChEBI" id="CHEBI:57856"/>
        <dbReference type="ChEBI" id="CHEBI:59789"/>
        <dbReference type="ChEBI" id="CHEBI:87136"/>
        <dbReference type="ChEBI" id="CHEBI:87305"/>
        <dbReference type="EC" id="2.1.1.104"/>
    </reaction>
</comment>
<comment type="cofactor">
    <cofactor evidence="2">
        <name>a divalent metal cation</name>
        <dbReference type="ChEBI" id="CHEBI:60240"/>
    </cofactor>
    <text evidence="2">Binds 1 divalent metal cation per subunit.</text>
</comment>
<comment type="pathway">
    <text>Aromatic compound metabolism; phenylpropanoid biosynthesis.</text>
</comment>
<comment type="subunit">
    <text evidence="1">Homodimer.</text>
</comment>
<comment type="similarity">
    <text evidence="3">Belongs to the class I-like SAM-binding methyltransferase superfamily. Cation-dependent O-methyltransferase family. CCoAMT subfamily.</text>
</comment>
<organism>
    <name type="scientific">Eucalyptus gunnii</name>
    <name type="common">Cider gum</name>
    <dbReference type="NCBI Taxonomy" id="3933"/>
    <lineage>
        <taxon>Eukaryota</taxon>
        <taxon>Viridiplantae</taxon>
        <taxon>Streptophyta</taxon>
        <taxon>Embryophyta</taxon>
        <taxon>Tracheophyta</taxon>
        <taxon>Spermatophyta</taxon>
        <taxon>Magnoliopsida</taxon>
        <taxon>eudicotyledons</taxon>
        <taxon>Gunneridae</taxon>
        <taxon>Pentapetalae</taxon>
        <taxon>rosids</taxon>
        <taxon>malvids</taxon>
        <taxon>Myrtales</taxon>
        <taxon>Myrtaceae</taxon>
        <taxon>Myrtoideae</taxon>
        <taxon>Eucalypteae</taxon>
        <taxon>Eucalyptus</taxon>
    </lineage>
</organism>
<reference key="1">
    <citation type="submission" date="1997-04" db="EMBL/GenBank/DDBJ databases">
        <authorList>
            <person name="Rech P."/>
            <person name="Grima-Pettenati J."/>
            <person name="Boudet A.M."/>
        </authorList>
    </citation>
    <scope>NUCLEOTIDE SEQUENCE [MRNA]</scope>
    <source>
        <strain>cv. Afocel</strain>
    </source>
</reference>
<keyword id="KW-0438">Lignin biosynthesis</keyword>
<keyword id="KW-0479">Metal-binding</keyword>
<keyword id="KW-0489">Methyltransferase</keyword>
<keyword id="KW-0949">S-adenosyl-L-methionine</keyword>
<keyword id="KW-0808">Transferase</keyword>
<evidence type="ECO:0000250" key="1"/>
<evidence type="ECO:0000250" key="2">
    <source>
        <dbReference type="UniProtKB" id="Q40313"/>
    </source>
</evidence>
<evidence type="ECO:0000255" key="3">
    <source>
        <dbReference type="PROSITE-ProRule" id="PRU01019"/>
    </source>
</evidence>
<accession>O04854</accession>
<proteinExistence type="evidence at transcript level"/>
<protein>
    <recommendedName>
        <fullName>Caffeoyl-CoA O-methyltransferase</fullName>
        <ecNumber>2.1.1.104</ecNumber>
    </recommendedName>
    <alternativeName>
        <fullName>Trans-caffeoyl-CoA 3-O-methyltransferase</fullName>
        <shortName>CCoAMT</shortName>
        <shortName>CCoAOMT</shortName>
    </alternativeName>
</protein>
<sequence>MATAGEESQTQAGRHQEVGHKSLLQSDALYQYILETSVYPREPEPMKELREITAKHPWNIMTTSADEGQFLNMLLKLINAKNTMEIGVFTGYSLLATALALPDDGKILAMDINRENYELGLPVIQKAGVADKIDFREGPALPILDQLIEDGKQGSFDFIFVDADKDNYLNYHKRLIELVKVGGLIGYDNTLWNGSVVAPPDAPLRKYVRYYRDFVLELNKALAADPRIEICMLPVGDGITLCRRIQLSI</sequence>